<feature type="chain" id="PRO_1000013296" description="Large ribosomal subunit protein bL34">
    <location>
        <begin position="1"/>
        <end position="44"/>
    </location>
</feature>
<accession>A3MS23</accession>
<organism>
    <name type="scientific">Burkholderia mallei (strain NCTC 10247)</name>
    <dbReference type="NCBI Taxonomy" id="320389"/>
    <lineage>
        <taxon>Bacteria</taxon>
        <taxon>Pseudomonadati</taxon>
        <taxon>Pseudomonadota</taxon>
        <taxon>Betaproteobacteria</taxon>
        <taxon>Burkholderiales</taxon>
        <taxon>Burkholderiaceae</taxon>
        <taxon>Burkholderia</taxon>
        <taxon>pseudomallei group</taxon>
    </lineage>
</organism>
<comment type="similarity">
    <text evidence="1">Belongs to the bacterial ribosomal protein bL34 family.</text>
</comment>
<protein>
    <recommendedName>
        <fullName evidence="1">Large ribosomal subunit protein bL34</fullName>
    </recommendedName>
    <alternativeName>
        <fullName evidence="2">50S ribosomal protein L34</fullName>
    </alternativeName>
</protein>
<sequence>MKRTYQPSVTRRKRTHGFRVRMKTAGGRKVINARRAKGRKRLAI</sequence>
<proteinExistence type="inferred from homology"/>
<evidence type="ECO:0000255" key="1">
    <source>
        <dbReference type="HAMAP-Rule" id="MF_00391"/>
    </source>
</evidence>
<evidence type="ECO:0000305" key="2"/>
<dbReference type="EMBL" id="CP000548">
    <property type="protein sequence ID" value="ABO04577.1"/>
    <property type="molecule type" value="Genomic_DNA"/>
</dbReference>
<dbReference type="RefSeq" id="WP_004198824.1">
    <property type="nucleotide sequence ID" value="NZ_CP007802.1"/>
</dbReference>
<dbReference type="SMR" id="A3MS23"/>
<dbReference type="GeneID" id="98107775"/>
<dbReference type="KEGG" id="bmaz:BM44_2967"/>
<dbReference type="KEGG" id="bmn:BMA10247_3553"/>
<dbReference type="PATRIC" id="fig|320389.8.peg.3344"/>
<dbReference type="GO" id="GO:1990904">
    <property type="term" value="C:ribonucleoprotein complex"/>
    <property type="evidence" value="ECO:0007669"/>
    <property type="project" value="UniProtKB-KW"/>
</dbReference>
<dbReference type="GO" id="GO:0005840">
    <property type="term" value="C:ribosome"/>
    <property type="evidence" value="ECO:0007669"/>
    <property type="project" value="UniProtKB-KW"/>
</dbReference>
<dbReference type="GO" id="GO:0003735">
    <property type="term" value="F:structural constituent of ribosome"/>
    <property type="evidence" value="ECO:0007669"/>
    <property type="project" value="InterPro"/>
</dbReference>
<dbReference type="GO" id="GO:0006412">
    <property type="term" value="P:translation"/>
    <property type="evidence" value="ECO:0007669"/>
    <property type="project" value="UniProtKB-UniRule"/>
</dbReference>
<dbReference type="FunFam" id="1.10.287.3980:FF:000001">
    <property type="entry name" value="Mitochondrial ribosomal protein L34"/>
    <property type="match status" value="1"/>
</dbReference>
<dbReference type="Gene3D" id="1.10.287.3980">
    <property type="match status" value="1"/>
</dbReference>
<dbReference type="HAMAP" id="MF_00391">
    <property type="entry name" value="Ribosomal_bL34"/>
    <property type="match status" value="1"/>
</dbReference>
<dbReference type="InterPro" id="IPR000271">
    <property type="entry name" value="Ribosomal_bL34"/>
</dbReference>
<dbReference type="InterPro" id="IPR020939">
    <property type="entry name" value="Ribosomal_bL34_CS"/>
</dbReference>
<dbReference type="NCBIfam" id="TIGR01030">
    <property type="entry name" value="rpmH_bact"/>
    <property type="match status" value="1"/>
</dbReference>
<dbReference type="PANTHER" id="PTHR14503:SF4">
    <property type="entry name" value="LARGE RIBOSOMAL SUBUNIT PROTEIN BL34M"/>
    <property type="match status" value="1"/>
</dbReference>
<dbReference type="PANTHER" id="PTHR14503">
    <property type="entry name" value="MITOCHONDRIAL RIBOSOMAL PROTEIN 34 FAMILY MEMBER"/>
    <property type="match status" value="1"/>
</dbReference>
<dbReference type="Pfam" id="PF00468">
    <property type="entry name" value="Ribosomal_L34"/>
    <property type="match status" value="1"/>
</dbReference>
<dbReference type="PROSITE" id="PS00784">
    <property type="entry name" value="RIBOSOMAL_L34"/>
    <property type="match status" value="1"/>
</dbReference>
<reference key="1">
    <citation type="journal article" date="2010" name="Genome Biol. Evol.">
        <title>Continuing evolution of Burkholderia mallei through genome reduction and large-scale rearrangements.</title>
        <authorList>
            <person name="Losada L."/>
            <person name="Ronning C.M."/>
            <person name="DeShazer D."/>
            <person name="Woods D."/>
            <person name="Fedorova N."/>
            <person name="Kim H.S."/>
            <person name="Shabalina S.A."/>
            <person name="Pearson T.R."/>
            <person name="Brinkac L."/>
            <person name="Tan P."/>
            <person name="Nandi T."/>
            <person name="Crabtree J."/>
            <person name="Badger J."/>
            <person name="Beckstrom-Sternberg S."/>
            <person name="Saqib M."/>
            <person name="Schutzer S.E."/>
            <person name="Keim P."/>
            <person name="Nierman W.C."/>
        </authorList>
    </citation>
    <scope>NUCLEOTIDE SEQUENCE [LARGE SCALE GENOMIC DNA]</scope>
    <source>
        <strain>NCTC 10247</strain>
    </source>
</reference>
<keyword id="KW-0687">Ribonucleoprotein</keyword>
<keyword id="KW-0689">Ribosomal protein</keyword>
<name>RL34_BURM7</name>
<gene>
    <name evidence="1" type="primary">rpmH</name>
    <name type="ordered locus">BMA10247_3553</name>
</gene>